<comment type="function">
    <text evidence="1">Binds to 23S rRNA. Forms part of two intersubunit bridges in the 70S ribosome.</text>
</comment>
<comment type="subunit">
    <text evidence="1">Part of the 50S ribosomal subunit. Forms a cluster with proteins L3 and L19. In the 70S ribosome, L14 and L19 interact and together make contacts with the 16S rRNA in bridges B5 and B8.</text>
</comment>
<comment type="similarity">
    <text evidence="1">Belongs to the universal ribosomal protein uL14 family.</text>
</comment>
<evidence type="ECO:0000255" key="1">
    <source>
        <dbReference type="HAMAP-Rule" id="MF_01367"/>
    </source>
</evidence>
<evidence type="ECO:0000305" key="2"/>
<gene>
    <name evidence="1" type="primary">rplN</name>
    <name type="ordered locus">HY04AAS1_0275</name>
</gene>
<accession>B4U754</accession>
<reference key="1">
    <citation type="journal article" date="2009" name="J. Bacteriol.">
        <title>Complete and draft genome sequences of six members of the Aquificales.</title>
        <authorList>
            <person name="Reysenbach A.-L."/>
            <person name="Hamamura N."/>
            <person name="Podar M."/>
            <person name="Griffiths E."/>
            <person name="Ferreira S."/>
            <person name="Hochstein R."/>
            <person name="Heidelberg J."/>
            <person name="Johnson J."/>
            <person name="Mead D."/>
            <person name="Pohorille A."/>
            <person name="Sarmiento M."/>
            <person name="Schweighofer K."/>
            <person name="Seshadri R."/>
            <person name="Voytek M.A."/>
        </authorList>
    </citation>
    <scope>NUCLEOTIDE SEQUENCE [LARGE SCALE GENOMIC DNA]</scope>
    <source>
        <strain>Y04AAS1</strain>
    </source>
</reference>
<keyword id="KW-0687">Ribonucleoprotein</keyword>
<keyword id="KW-0689">Ribosomal protein</keyword>
<keyword id="KW-0694">RNA-binding</keyword>
<keyword id="KW-0699">rRNA-binding</keyword>
<organism>
    <name type="scientific">Hydrogenobaculum sp. (strain Y04AAS1)</name>
    <dbReference type="NCBI Taxonomy" id="380749"/>
    <lineage>
        <taxon>Bacteria</taxon>
        <taxon>Pseudomonadati</taxon>
        <taxon>Aquificota</taxon>
        <taxon>Aquificia</taxon>
        <taxon>Aquificales</taxon>
        <taxon>Aquificaceae</taxon>
        <taxon>Hydrogenobaculum</taxon>
    </lineage>
</organism>
<protein>
    <recommendedName>
        <fullName evidence="1">Large ribosomal subunit protein uL14</fullName>
    </recommendedName>
    <alternativeName>
        <fullName evidence="2">50S ribosomal protein L14</fullName>
    </alternativeName>
</protein>
<sequence>MIQRQSYLNVADNSGAKKVQMIGIPYALRQYVSVGDVVTVTVKEATPNGAAKKGKVYRAVVVRVAKELKRSDGSYIKFDDNAVILLNQYGESLGTRILGPIAREVRNRGFTKIASLAAEVV</sequence>
<dbReference type="EMBL" id="CP001130">
    <property type="protein sequence ID" value="ACG56965.1"/>
    <property type="molecule type" value="Genomic_DNA"/>
</dbReference>
<dbReference type="RefSeq" id="WP_012513321.1">
    <property type="nucleotide sequence ID" value="NC_011126.1"/>
</dbReference>
<dbReference type="SMR" id="B4U754"/>
<dbReference type="STRING" id="380749.HY04AAS1_0275"/>
<dbReference type="KEGG" id="hya:HY04AAS1_0275"/>
<dbReference type="eggNOG" id="COG0093">
    <property type="taxonomic scope" value="Bacteria"/>
</dbReference>
<dbReference type="HOGENOM" id="CLU_095071_2_1_0"/>
<dbReference type="OrthoDB" id="9806379at2"/>
<dbReference type="GO" id="GO:0022625">
    <property type="term" value="C:cytosolic large ribosomal subunit"/>
    <property type="evidence" value="ECO:0007669"/>
    <property type="project" value="TreeGrafter"/>
</dbReference>
<dbReference type="GO" id="GO:0070180">
    <property type="term" value="F:large ribosomal subunit rRNA binding"/>
    <property type="evidence" value="ECO:0007669"/>
    <property type="project" value="TreeGrafter"/>
</dbReference>
<dbReference type="GO" id="GO:0003735">
    <property type="term" value="F:structural constituent of ribosome"/>
    <property type="evidence" value="ECO:0007669"/>
    <property type="project" value="InterPro"/>
</dbReference>
<dbReference type="GO" id="GO:0006412">
    <property type="term" value="P:translation"/>
    <property type="evidence" value="ECO:0007669"/>
    <property type="project" value="UniProtKB-UniRule"/>
</dbReference>
<dbReference type="CDD" id="cd00337">
    <property type="entry name" value="Ribosomal_uL14"/>
    <property type="match status" value="1"/>
</dbReference>
<dbReference type="Gene3D" id="2.40.150.20">
    <property type="entry name" value="Ribosomal protein L14"/>
    <property type="match status" value="1"/>
</dbReference>
<dbReference type="HAMAP" id="MF_01367">
    <property type="entry name" value="Ribosomal_uL14"/>
    <property type="match status" value="1"/>
</dbReference>
<dbReference type="InterPro" id="IPR000218">
    <property type="entry name" value="Ribosomal_uL14"/>
</dbReference>
<dbReference type="InterPro" id="IPR005745">
    <property type="entry name" value="Ribosomal_uL14_bac-type"/>
</dbReference>
<dbReference type="InterPro" id="IPR036853">
    <property type="entry name" value="Ribosomal_uL14_sf"/>
</dbReference>
<dbReference type="NCBIfam" id="TIGR01067">
    <property type="entry name" value="rplN_bact"/>
    <property type="match status" value="1"/>
</dbReference>
<dbReference type="PANTHER" id="PTHR11761">
    <property type="entry name" value="50S/60S RIBOSOMAL PROTEIN L14/L23"/>
    <property type="match status" value="1"/>
</dbReference>
<dbReference type="PANTHER" id="PTHR11761:SF3">
    <property type="entry name" value="LARGE RIBOSOMAL SUBUNIT PROTEIN UL14M"/>
    <property type="match status" value="1"/>
</dbReference>
<dbReference type="Pfam" id="PF00238">
    <property type="entry name" value="Ribosomal_L14"/>
    <property type="match status" value="1"/>
</dbReference>
<dbReference type="SMART" id="SM01374">
    <property type="entry name" value="Ribosomal_L14"/>
    <property type="match status" value="1"/>
</dbReference>
<dbReference type="SUPFAM" id="SSF50193">
    <property type="entry name" value="Ribosomal protein L14"/>
    <property type="match status" value="1"/>
</dbReference>
<proteinExistence type="inferred from homology"/>
<name>RL14_HYDS0</name>
<feature type="chain" id="PRO_1000144285" description="Large ribosomal subunit protein uL14">
    <location>
        <begin position="1"/>
        <end position="121"/>
    </location>
</feature>